<proteinExistence type="inferred from homology"/>
<name>FPG_STRPM</name>
<organism>
    <name type="scientific">Streptococcus pyogenes serotype M28 (strain MGAS6180)</name>
    <dbReference type="NCBI Taxonomy" id="319701"/>
    <lineage>
        <taxon>Bacteria</taxon>
        <taxon>Bacillati</taxon>
        <taxon>Bacillota</taxon>
        <taxon>Bacilli</taxon>
        <taxon>Lactobacillales</taxon>
        <taxon>Streptococcaceae</taxon>
        <taxon>Streptococcus</taxon>
    </lineage>
</organism>
<sequence>MPELPEVETVRRGLETLVLGQEIVAVTLKVPKMVKTDLETFALTLPGQIIQSVGRRGKYLLIDLGQLVLVSHLRMEGKYLLFPDEVPDNKHFHVFFELKNGSTLVYQDVRKFGTFDLIAKSQLSAFFAKRKLGPEPKKETFKLKTFEAALLSSQKPIKPHLLDQTLVAGLGNIYVDEVLWAAKVHPGTASSRLNKAEIKRLHDETIRILALGIEKGGSTVRTYRNALGADGTMQDYLQVYGQTGKPCPRCGQAIVKLKVGGRGTHICPKCQKKRP</sequence>
<feature type="initiator methionine" description="Removed" evidence="1">
    <location>
        <position position="1"/>
    </location>
</feature>
<feature type="chain" id="PRO_0000228474" description="Formamidopyrimidine-DNA glycosylase">
    <location>
        <begin position="2"/>
        <end position="275"/>
    </location>
</feature>
<feature type="zinc finger region" description="FPG-type" evidence="2">
    <location>
        <begin position="238"/>
        <end position="272"/>
    </location>
</feature>
<feature type="active site" description="Schiff-base intermediate with DNA" evidence="2">
    <location>
        <position position="2"/>
    </location>
</feature>
<feature type="active site" description="Proton donor" evidence="2">
    <location>
        <position position="3"/>
    </location>
</feature>
<feature type="active site" description="Proton donor; for beta-elimination activity" evidence="2">
    <location>
        <position position="58"/>
    </location>
</feature>
<feature type="active site" description="Proton donor; for delta-elimination activity" evidence="2">
    <location>
        <position position="262"/>
    </location>
</feature>
<feature type="binding site" evidence="2">
    <location>
        <position position="91"/>
    </location>
    <ligand>
        <name>DNA</name>
        <dbReference type="ChEBI" id="CHEBI:16991"/>
    </ligand>
</feature>
<feature type="binding site" evidence="2">
    <location>
        <position position="110"/>
    </location>
    <ligand>
        <name>DNA</name>
        <dbReference type="ChEBI" id="CHEBI:16991"/>
    </ligand>
</feature>
<evidence type="ECO:0000250" key="1"/>
<evidence type="ECO:0000255" key="2">
    <source>
        <dbReference type="HAMAP-Rule" id="MF_00103"/>
    </source>
</evidence>
<protein>
    <recommendedName>
        <fullName evidence="2">Formamidopyrimidine-DNA glycosylase</fullName>
        <shortName evidence="2">Fapy-DNA glycosylase</shortName>
        <ecNumber evidence="2">3.2.2.23</ecNumber>
    </recommendedName>
    <alternativeName>
        <fullName evidence="2">DNA-(apurinic or apyrimidinic site) lyase MutM</fullName>
        <shortName evidence="2">AP lyase MutM</shortName>
        <ecNumber evidence="2">4.2.99.18</ecNumber>
    </alternativeName>
</protein>
<comment type="function">
    <text evidence="2">Involved in base excision repair of DNA damaged by oxidation or by mutagenic agents. Acts as a DNA glycosylase that recognizes and removes damaged bases. Has a preference for oxidized purines, such as 7,8-dihydro-8-oxoguanine (8-oxoG). Has AP (apurinic/apyrimidinic) lyase activity and introduces nicks in the DNA strand. Cleaves the DNA backbone by beta-delta elimination to generate a single-strand break at the site of the removed base with both 3'- and 5'-phosphates.</text>
</comment>
<comment type="catalytic activity">
    <reaction evidence="2">
        <text>Hydrolysis of DNA containing ring-opened 7-methylguanine residues, releasing 2,6-diamino-4-hydroxy-5-(N-methyl)formamidopyrimidine.</text>
        <dbReference type="EC" id="3.2.2.23"/>
    </reaction>
</comment>
<comment type="catalytic activity">
    <reaction evidence="2">
        <text>2'-deoxyribonucleotide-(2'-deoxyribose 5'-phosphate)-2'-deoxyribonucleotide-DNA = a 3'-end 2'-deoxyribonucleotide-(2,3-dehydro-2,3-deoxyribose 5'-phosphate)-DNA + a 5'-end 5'-phospho-2'-deoxyribonucleoside-DNA + H(+)</text>
        <dbReference type="Rhea" id="RHEA:66592"/>
        <dbReference type="Rhea" id="RHEA-COMP:13180"/>
        <dbReference type="Rhea" id="RHEA-COMP:16897"/>
        <dbReference type="Rhea" id="RHEA-COMP:17067"/>
        <dbReference type="ChEBI" id="CHEBI:15378"/>
        <dbReference type="ChEBI" id="CHEBI:136412"/>
        <dbReference type="ChEBI" id="CHEBI:157695"/>
        <dbReference type="ChEBI" id="CHEBI:167181"/>
        <dbReference type="EC" id="4.2.99.18"/>
    </reaction>
</comment>
<comment type="cofactor">
    <cofactor evidence="2">
        <name>Zn(2+)</name>
        <dbReference type="ChEBI" id="CHEBI:29105"/>
    </cofactor>
    <text evidence="2">Binds 1 zinc ion per subunit.</text>
</comment>
<comment type="subunit">
    <text evidence="2">Monomer.</text>
</comment>
<comment type="similarity">
    <text evidence="2">Belongs to the FPG family.</text>
</comment>
<gene>
    <name evidence="2" type="primary">mutM</name>
    <name evidence="2" type="synonym">fpg</name>
    <name type="ordered locus">M28_Spy0396</name>
</gene>
<accession>Q48UU6</accession>
<reference key="1">
    <citation type="journal article" date="2005" name="J. Infect. Dis.">
        <title>Genome sequence of a serotype M28 strain of group A Streptococcus: potential new insights into puerperal sepsis and bacterial disease specificity.</title>
        <authorList>
            <person name="Green N.M."/>
            <person name="Zhang S."/>
            <person name="Porcella S.F."/>
            <person name="Nagiec M.J."/>
            <person name="Barbian K.D."/>
            <person name="Beres S.B."/>
            <person name="Lefebvre R.B."/>
            <person name="Musser J.M."/>
        </authorList>
    </citation>
    <scope>NUCLEOTIDE SEQUENCE [LARGE SCALE GENOMIC DNA]</scope>
    <source>
        <strain>MGAS6180</strain>
    </source>
</reference>
<dbReference type="EC" id="3.2.2.23" evidence="2"/>
<dbReference type="EC" id="4.2.99.18" evidence="2"/>
<dbReference type="EMBL" id="CP000056">
    <property type="protein sequence ID" value="AAX71510.1"/>
    <property type="molecule type" value="Genomic_DNA"/>
</dbReference>
<dbReference type="RefSeq" id="WP_002994138.1">
    <property type="nucleotide sequence ID" value="NC_007296.2"/>
</dbReference>
<dbReference type="SMR" id="Q48UU6"/>
<dbReference type="KEGG" id="spb:M28_Spy0396"/>
<dbReference type="HOGENOM" id="CLU_038423_1_2_9"/>
<dbReference type="GO" id="GO:0034039">
    <property type="term" value="F:8-oxo-7,8-dihydroguanine DNA N-glycosylase activity"/>
    <property type="evidence" value="ECO:0007669"/>
    <property type="project" value="TreeGrafter"/>
</dbReference>
<dbReference type="GO" id="GO:0140078">
    <property type="term" value="F:class I DNA-(apurinic or apyrimidinic site) endonuclease activity"/>
    <property type="evidence" value="ECO:0007669"/>
    <property type="project" value="UniProtKB-EC"/>
</dbReference>
<dbReference type="GO" id="GO:0003684">
    <property type="term" value="F:damaged DNA binding"/>
    <property type="evidence" value="ECO:0007669"/>
    <property type="project" value="InterPro"/>
</dbReference>
<dbReference type="GO" id="GO:0008270">
    <property type="term" value="F:zinc ion binding"/>
    <property type="evidence" value="ECO:0007669"/>
    <property type="project" value="UniProtKB-UniRule"/>
</dbReference>
<dbReference type="GO" id="GO:0006284">
    <property type="term" value="P:base-excision repair"/>
    <property type="evidence" value="ECO:0007669"/>
    <property type="project" value="InterPro"/>
</dbReference>
<dbReference type="CDD" id="cd08966">
    <property type="entry name" value="EcFpg-like_N"/>
    <property type="match status" value="1"/>
</dbReference>
<dbReference type="FunFam" id="1.10.8.50:FF:000003">
    <property type="entry name" value="Formamidopyrimidine-DNA glycosylase"/>
    <property type="match status" value="1"/>
</dbReference>
<dbReference type="FunFam" id="3.20.190.10:FF:000001">
    <property type="entry name" value="Formamidopyrimidine-DNA glycosylase"/>
    <property type="match status" value="1"/>
</dbReference>
<dbReference type="Gene3D" id="1.10.8.50">
    <property type="match status" value="1"/>
</dbReference>
<dbReference type="Gene3D" id="3.20.190.10">
    <property type="entry name" value="MutM-like, N-terminal"/>
    <property type="match status" value="1"/>
</dbReference>
<dbReference type="HAMAP" id="MF_00103">
    <property type="entry name" value="Fapy_DNA_glycosyl"/>
    <property type="match status" value="1"/>
</dbReference>
<dbReference type="InterPro" id="IPR015886">
    <property type="entry name" value="DNA_glyclase/AP_lyase_DNA-bd"/>
</dbReference>
<dbReference type="InterPro" id="IPR015887">
    <property type="entry name" value="DNA_glyclase_Znf_dom_DNA_BS"/>
</dbReference>
<dbReference type="InterPro" id="IPR020629">
    <property type="entry name" value="Formamido-pyr_DNA_Glyclase"/>
</dbReference>
<dbReference type="InterPro" id="IPR012319">
    <property type="entry name" value="FPG_cat"/>
</dbReference>
<dbReference type="InterPro" id="IPR035937">
    <property type="entry name" value="MutM-like_N-ter"/>
</dbReference>
<dbReference type="InterPro" id="IPR010979">
    <property type="entry name" value="Ribosomal_uS13-like_H2TH"/>
</dbReference>
<dbReference type="InterPro" id="IPR000214">
    <property type="entry name" value="Znf_DNA_glyclase/AP_lyase"/>
</dbReference>
<dbReference type="InterPro" id="IPR010663">
    <property type="entry name" value="Znf_FPG/IleRS"/>
</dbReference>
<dbReference type="NCBIfam" id="TIGR00577">
    <property type="entry name" value="fpg"/>
    <property type="match status" value="1"/>
</dbReference>
<dbReference type="NCBIfam" id="NF002211">
    <property type="entry name" value="PRK01103.1"/>
    <property type="match status" value="1"/>
</dbReference>
<dbReference type="PANTHER" id="PTHR22993">
    <property type="entry name" value="FORMAMIDOPYRIMIDINE-DNA GLYCOSYLASE"/>
    <property type="match status" value="1"/>
</dbReference>
<dbReference type="PANTHER" id="PTHR22993:SF9">
    <property type="entry name" value="FORMAMIDOPYRIMIDINE-DNA GLYCOSYLASE"/>
    <property type="match status" value="1"/>
</dbReference>
<dbReference type="Pfam" id="PF01149">
    <property type="entry name" value="Fapy_DNA_glyco"/>
    <property type="match status" value="1"/>
</dbReference>
<dbReference type="Pfam" id="PF06831">
    <property type="entry name" value="H2TH"/>
    <property type="match status" value="1"/>
</dbReference>
<dbReference type="Pfam" id="PF06827">
    <property type="entry name" value="zf-FPG_IleRS"/>
    <property type="match status" value="1"/>
</dbReference>
<dbReference type="SMART" id="SM00898">
    <property type="entry name" value="Fapy_DNA_glyco"/>
    <property type="match status" value="1"/>
</dbReference>
<dbReference type="SMART" id="SM01232">
    <property type="entry name" value="H2TH"/>
    <property type="match status" value="1"/>
</dbReference>
<dbReference type="SUPFAM" id="SSF57716">
    <property type="entry name" value="Glucocorticoid receptor-like (DNA-binding domain)"/>
    <property type="match status" value="1"/>
</dbReference>
<dbReference type="SUPFAM" id="SSF81624">
    <property type="entry name" value="N-terminal domain of MutM-like DNA repair proteins"/>
    <property type="match status" value="1"/>
</dbReference>
<dbReference type="SUPFAM" id="SSF46946">
    <property type="entry name" value="S13-like H2TH domain"/>
    <property type="match status" value="1"/>
</dbReference>
<dbReference type="PROSITE" id="PS51068">
    <property type="entry name" value="FPG_CAT"/>
    <property type="match status" value="1"/>
</dbReference>
<dbReference type="PROSITE" id="PS01242">
    <property type="entry name" value="ZF_FPG_1"/>
    <property type="match status" value="1"/>
</dbReference>
<dbReference type="PROSITE" id="PS51066">
    <property type="entry name" value="ZF_FPG_2"/>
    <property type="match status" value="1"/>
</dbReference>
<keyword id="KW-0227">DNA damage</keyword>
<keyword id="KW-0234">DNA repair</keyword>
<keyword id="KW-0238">DNA-binding</keyword>
<keyword id="KW-0326">Glycosidase</keyword>
<keyword id="KW-0378">Hydrolase</keyword>
<keyword id="KW-0456">Lyase</keyword>
<keyword id="KW-0479">Metal-binding</keyword>
<keyword id="KW-0511">Multifunctional enzyme</keyword>
<keyword id="KW-0862">Zinc</keyword>
<keyword id="KW-0863">Zinc-finger</keyword>